<comment type="function">
    <text evidence="1">Catalyzes xyloglucan endohydrolysis (XEH) and/or endotransglycosylation (XET). Cleaves and religates xyloglucan polymers, an essential constituent of the primary cell wall, and thereby participates in cell wall construction of growing tissues (By similarity).</text>
</comment>
<comment type="catalytic activity">
    <reaction>
        <text>breaks a beta-(1-&gt;4) bond in the backbone of a xyloglucan and transfers the xyloglucanyl segment on to O-4 of the non-reducing terminal glucose residue of an acceptor, which can be a xyloglucan or an oligosaccharide of xyloglucan.</text>
        <dbReference type="EC" id="2.4.1.207"/>
    </reaction>
</comment>
<comment type="subcellular location">
    <subcellularLocation>
        <location evidence="7">Secreted</location>
        <location evidence="7">Cell wall</location>
    </subcellularLocation>
    <subcellularLocation>
        <location evidence="7">Secreted</location>
        <location evidence="7">Extracellular space</location>
        <location evidence="7">Apoplast</location>
    </subcellularLocation>
</comment>
<comment type="tissue specificity">
    <text evidence="6">Root specific.</text>
</comment>
<comment type="induction">
    <text evidence="6">Strongly down-regulated by abscisic acid (ABA).</text>
</comment>
<comment type="PTM">
    <text evidence="1">Contains at least one intrachain disulfide bond essential for its enzymatic activity.</text>
</comment>
<comment type="similarity">
    <text evidence="7">Belongs to the glycosyl hydrolase 16 family. XTH group 2 subfamily.</text>
</comment>
<reference key="1">
    <citation type="journal article" date="1998" name="DNA Res.">
        <title>Structural analysis of Arabidopsis thaliana chromosome 5. V. Sequence features of the regions of 1,381,565 bp covered by twenty one physically assigned P1 and TAC clones.</title>
        <authorList>
            <person name="Kaneko T."/>
            <person name="Kotani H."/>
            <person name="Nakamura Y."/>
            <person name="Sato S."/>
            <person name="Asamizu E."/>
            <person name="Miyajima N."/>
            <person name="Tabata S."/>
        </authorList>
    </citation>
    <scope>NUCLEOTIDE SEQUENCE [LARGE SCALE GENOMIC DNA]</scope>
    <source>
        <strain>cv. Columbia</strain>
    </source>
</reference>
<reference key="2">
    <citation type="journal article" date="2017" name="Plant J.">
        <title>Araport11: a complete reannotation of the Arabidopsis thaliana reference genome.</title>
        <authorList>
            <person name="Cheng C.Y."/>
            <person name="Krishnakumar V."/>
            <person name="Chan A.P."/>
            <person name="Thibaud-Nissen F."/>
            <person name="Schobel S."/>
            <person name="Town C.D."/>
        </authorList>
    </citation>
    <scope>GENOME REANNOTATION</scope>
    <source>
        <strain>cv. Columbia</strain>
    </source>
</reference>
<reference key="3">
    <citation type="journal article" date="2003" name="Science">
        <title>Empirical analysis of transcriptional activity in the Arabidopsis genome.</title>
        <authorList>
            <person name="Yamada K."/>
            <person name="Lim J."/>
            <person name="Dale J.M."/>
            <person name="Chen H."/>
            <person name="Shinn P."/>
            <person name="Palm C.J."/>
            <person name="Southwick A.M."/>
            <person name="Wu H.C."/>
            <person name="Kim C.J."/>
            <person name="Nguyen M."/>
            <person name="Pham P.K."/>
            <person name="Cheuk R.F."/>
            <person name="Karlin-Newmann G."/>
            <person name="Liu S.X."/>
            <person name="Lam B."/>
            <person name="Sakano H."/>
            <person name="Wu T."/>
            <person name="Yu G."/>
            <person name="Miranda M."/>
            <person name="Quach H.L."/>
            <person name="Tripp M."/>
            <person name="Chang C.H."/>
            <person name="Lee J.M."/>
            <person name="Toriumi M.J."/>
            <person name="Chan M.M."/>
            <person name="Tang C.C."/>
            <person name="Onodera C.S."/>
            <person name="Deng J.M."/>
            <person name="Akiyama K."/>
            <person name="Ansari Y."/>
            <person name="Arakawa T."/>
            <person name="Banh J."/>
            <person name="Banno F."/>
            <person name="Bowser L."/>
            <person name="Brooks S.Y."/>
            <person name="Carninci P."/>
            <person name="Chao Q."/>
            <person name="Choy N."/>
            <person name="Enju A."/>
            <person name="Goldsmith A.D."/>
            <person name="Gurjal M."/>
            <person name="Hansen N.F."/>
            <person name="Hayashizaki Y."/>
            <person name="Johnson-Hopson C."/>
            <person name="Hsuan V.W."/>
            <person name="Iida K."/>
            <person name="Karnes M."/>
            <person name="Khan S."/>
            <person name="Koesema E."/>
            <person name="Ishida J."/>
            <person name="Jiang P.X."/>
            <person name="Jones T."/>
            <person name="Kawai J."/>
            <person name="Kamiya A."/>
            <person name="Meyers C."/>
            <person name="Nakajima M."/>
            <person name="Narusaka M."/>
            <person name="Seki M."/>
            <person name="Sakurai T."/>
            <person name="Satou M."/>
            <person name="Tamse R."/>
            <person name="Vaysberg M."/>
            <person name="Wallender E.K."/>
            <person name="Wong C."/>
            <person name="Yamamura Y."/>
            <person name="Yuan S."/>
            <person name="Shinozaki K."/>
            <person name="Davis R.W."/>
            <person name="Theologis A."/>
            <person name="Ecker J.R."/>
        </authorList>
    </citation>
    <scope>NUCLEOTIDE SEQUENCE [LARGE SCALE MRNA]</scope>
    <source>
        <strain>cv. Columbia</strain>
    </source>
</reference>
<reference key="4">
    <citation type="journal article" date="2001" name="Plant Cell Physiol.">
        <title>A comprehensive expression analysis of all members of a gene family encoding cell-wall enzymes allowed us to predict cis-regulatory regions involved in cell-wall construction in specific organs of Arabidopsis.</title>
        <authorList>
            <person name="Yokoyama R."/>
            <person name="Nishitani K."/>
        </authorList>
    </citation>
    <scope>TISSUE SPECIFICITY</scope>
    <scope>INDUCTION</scope>
</reference>
<reference key="5">
    <citation type="journal article" date="2002" name="Plant Cell Physiol.">
        <title>The XTH family of enzymes involved in xyloglucan endotransglucosylation and endohydrolysis: current perspectives and a new unifying nomenclature.</title>
        <authorList>
            <person name="Rose J.K.C."/>
            <person name="Braam J."/>
            <person name="Fry S.C."/>
            <person name="Nishitani K."/>
        </authorList>
    </citation>
    <scope>NOMENCLATURE</scope>
</reference>
<feature type="signal peptide" evidence="3">
    <location>
        <begin position="1"/>
        <end position="25"/>
    </location>
</feature>
<feature type="chain" id="PRO_0000011812" description="Probable xyloglucan endotransglucosylase/hydrolase protein 12">
    <location>
        <begin position="26"/>
        <end position="285"/>
    </location>
</feature>
<feature type="domain" description="GH16" evidence="4">
    <location>
        <begin position="26"/>
        <end position="215"/>
    </location>
</feature>
<feature type="active site" description="Nucleophile" evidence="5">
    <location>
        <position position="101"/>
    </location>
</feature>
<feature type="active site" description="Proton donor" evidence="5">
    <location>
        <position position="105"/>
    </location>
</feature>
<feature type="binding site" evidence="2">
    <location>
        <position position="105"/>
    </location>
    <ligand>
        <name>xyloglucan</name>
        <dbReference type="ChEBI" id="CHEBI:18233"/>
    </ligand>
</feature>
<feature type="binding site" evidence="2">
    <location>
        <begin position="118"/>
        <end position="120"/>
    </location>
    <ligand>
        <name>xyloglucan</name>
        <dbReference type="ChEBI" id="CHEBI:18233"/>
    </ligand>
</feature>
<feature type="binding site" evidence="2">
    <location>
        <begin position="128"/>
        <end position="130"/>
    </location>
    <ligand>
        <name>xyloglucan</name>
        <dbReference type="ChEBI" id="CHEBI:18233"/>
    </ligand>
</feature>
<feature type="binding site" evidence="2">
    <location>
        <begin position="194"/>
        <end position="195"/>
    </location>
    <ligand>
        <name>xyloglucan</name>
        <dbReference type="ChEBI" id="CHEBI:18233"/>
    </ligand>
</feature>
<feature type="binding site" evidence="2">
    <location>
        <position position="199"/>
    </location>
    <ligand>
        <name>xyloglucan</name>
        <dbReference type="ChEBI" id="CHEBI:18233"/>
    </ligand>
</feature>
<feature type="binding site" evidence="2">
    <location>
        <position position="273"/>
    </location>
    <ligand>
        <name>xyloglucan</name>
        <dbReference type="ChEBI" id="CHEBI:18233"/>
    </ligand>
</feature>
<feature type="site" description="Important for catalytic activity" evidence="2">
    <location>
        <position position="103"/>
    </location>
</feature>
<feature type="glycosylation site" description="N-linked (GlcNAc...) asparagine" evidence="3">
    <location>
        <position position="109"/>
    </location>
</feature>
<feature type="disulfide bond" evidence="2">
    <location>
        <begin position="224"/>
        <end position="235"/>
    </location>
</feature>
<feature type="disulfide bond" evidence="2">
    <location>
        <begin position="268"/>
        <end position="282"/>
    </location>
</feature>
<dbReference type="EC" id="2.4.1.207"/>
<dbReference type="EMBL" id="AB011482">
    <property type="protein sequence ID" value="BAB08788.1"/>
    <property type="molecule type" value="Genomic_DNA"/>
</dbReference>
<dbReference type="EMBL" id="CP002688">
    <property type="protein sequence ID" value="AED96911.1"/>
    <property type="molecule type" value="Genomic_DNA"/>
</dbReference>
<dbReference type="EMBL" id="AY057625">
    <property type="protein sequence ID" value="AAL15256.1"/>
    <property type="molecule type" value="mRNA"/>
</dbReference>
<dbReference type="EMBL" id="AY113025">
    <property type="protein sequence ID" value="AAM47333.1"/>
    <property type="molecule type" value="mRNA"/>
</dbReference>
<dbReference type="RefSeq" id="NP_200561.1">
    <property type="nucleotide sequence ID" value="NM_125134.2"/>
</dbReference>
<dbReference type="SMR" id="Q9FKL9"/>
<dbReference type="FunCoup" id="Q9FKL9">
    <property type="interactions" value="37"/>
</dbReference>
<dbReference type="STRING" id="3702.Q9FKL9"/>
<dbReference type="CAZy" id="GH16">
    <property type="family name" value="Glycoside Hydrolase Family 16"/>
</dbReference>
<dbReference type="GlyCosmos" id="Q9FKL9">
    <property type="glycosylation" value="1 site, No reported glycans"/>
</dbReference>
<dbReference type="GlyGen" id="Q9FKL9">
    <property type="glycosylation" value="1 site"/>
</dbReference>
<dbReference type="PaxDb" id="3702-AT5G57530.1"/>
<dbReference type="ProteomicsDB" id="242410"/>
<dbReference type="EnsemblPlants" id="AT5G57530.1">
    <property type="protein sequence ID" value="AT5G57530.1"/>
    <property type="gene ID" value="AT5G57530"/>
</dbReference>
<dbReference type="GeneID" id="835857"/>
<dbReference type="Gramene" id="AT5G57530.1">
    <property type="protein sequence ID" value="AT5G57530.1"/>
    <property type="gene ID" value="AT5G57530"/>
</dbReference>
<dbReference type="KEGG" id="ath:AT5G57530"/>
<dbReference type="Araport" id="AT5G57530"/>
<dbReference type="TAIR" id="AT5G57530">
    <property type="gene designation" value="XTH12"/>
</dbReference>
<dbReference type="eggNOG" id="ENOG502QQ71">
    <property type="taxonomic scope" value="Eukaryota"/>
</dbReference>
<dbReference type="HOGENOM" id="CLU_048041_0_0_1"/>
<dbReference type="InParanoid" id="Q9FKL9"/>
<dbReference type="OMA" id="QPYVIHT"/>
<dbReference type="OrthoDB" id="4781at2759"/>
<dbReference type="PhylomeDB" id="Q9FKL9"/>
<dbReference type="BioCyc" id="ARA:AT5G57530-MONOMER"/>
<dbReference type="BRENDA" id="2.4.1.207">
    <property type="organism ID" value="399"/>
</dbReference>
<dbReference type="PRO" id="PR:Q9FKL9"/>
<dbReference type="Proteomes" id="UP000006548">
    <property type="component" value="Chromosome 5"/>
</dbReference>
<dbReference type="ExpressionAtlas" id="Q9FKL9">
    <property type="expression patterns" value="baseline and differential"/>
</dbReference>
<dbReference type="GO" id="GO:0048046">
    <property type="term" value="C:apoplast"/>
    <property type="evidence" value="ECO:0007669"/>
    <property type="project" value="UniProtKB-SubCell"/>
</dbReference>
<dbReference type="GO" id="GO:0005737">
    <property type="term" value="C:cytoplasm"/>
    <property type="evidence" value="ECO:0007005"/>
    <property type="project" value="TAIR"/>
</dbReference>
<dbReference type="GO" id="GO:0004553">
    <property type="term" value="F:hydrolase activity, hydrolyzing O-glycosyl compounds"/>
    <property type="evidence" value="ECO:0007669"/>
    <property type="project" value="InterPro"/>
</dbReference>
<dbReference type="GO" id="GO:0030247">
    <property type="term" value="F:polysaccharide binding"/>
    <property type="evidence" value="ECO:0000250"/>
    <property type="project" value="UniProtKB"/>
</dbReference>
<dbReference type="GO" id="GO:0016762">
    <property type="term" value="F:xyloglucan:xyloglucosyl transferase activity"/>
    <property type="evidence" value="ECO:0000314"/>
    <property type="project" value="TAIR"/>
</dbReference>
<dbReference type="GO" id="GO:0042546">
    <property type="term" value="P:cell wall biogenesis"/>
    <property type="evidence" value="ECO:0007669"/>
    <property type="project" value="InterPro"/>
</dbReference>
<dbReference type="GO" id="GO:0071555">
    <property type="term" value="P:cell wall organization"/>
    <property type="evidence" value="ECO:0007669"/>
    <property type="project" value="UniProtKB-KW"/>
</dbReference>
<dbReference type="GO" id="GO:0010411">
    <property type="term" value="P:xyloglucan metabolic process"/>
    <property type="evidence" value="ECO:0000314"/>
    <property type="project" value="TAIR"/>
</dbReference>
<dbReference type="CDD" id="cd02176">
    <property type="entry name" value="GH16_XET"/>
    <property type="match status" value="1"/>
</dbReference>
<dbReference type="FunFam" id="2.60.120.200:FF:000025">
    <property type="entry name" value="Xyloglucan endotransglucosylase/hydrolase"/>
    <property type="match status" value="1"/>
</dbReference>
<dbReference type="Gene3D" id="2.60.120.200">
    <property type="match status" value="1"/>
</dbReference>
<dbReference type="InterPro" id="IPR044791">
    <property type="entry name" value="Beta-glucanase/XTH"/>
</dbReference>
<dbReference type="InterPro" id="IPR013320">
    <property type="entry name" value="ConA-like_dom_sf"/>
</dbReference>
<dbReference type="InterPro" id="IPR000757">
    <property type="entry name" value="GH16"/>
</dbReference>
<dbReference type="InterPro" id="IPR008263">
    <property type="entry name" value="GH16_AS"/>
</dbReference>
<dbReference type="InterPro" id="IPR010713">
    <property type="entry name" value="XET_C"/>
</dbReference>
<dbReference type="InterPro" id="IPR016455">
    <property type="entry name" value="XTH"/>
</dbReference>
<dbReference type="PANTHER" id="PTHR31062">
    <property type="entry name" value="XYLOGLUCAN ENDOTRANSGLUCOSYLASE/HYDROLASE PROTEIN 8-RELATED"/>
    <property type="match status" value="1"/>
</dbReference>
<dbReference type="Pfam" id="PF00722">
    <property type="entry name" value="Glyco_hydro_16"/>
    <property type="match status" value="1"/>
</dbReference>
<dbReference type="Pfam" id="PF06955">
    <property type="entry name" value="XET_C"/>
    <property type="match status" value="1"/>
</dbReference>
<dbReference type="PIRSF" id="PIRSF005604">
    <property type="entry name" value="XET"/>
    <property type="match status" value="1"/>
</dbReference>
<dbReference type="SUPFAM" id="SSF49899">
    <property type="entry name" value="Concanavalin A-like lectins/glucanases"/>
    <property type="match status" value="1"/>
</dbReference>
<dbReference type="PROSITE" id="PS01034">
    <property type="entry name" value="GH16_1"/>
    <property type="match status" value="1"/>
</dbReference>
<dbReference type="PROSITE" id="PS51762">
    <property type="entry name" value="GH16_2"/>
    <property type="match status" value="1"/>
</dbReference>
<protein>
    <recommendedName>
        <fullName>Probable xyloglucan endotransglucosylase/hydrolase protein 12</fullName>
        <shortName>At-XTH12</shortName>
        <shortName>XTH-12</shortName>
        <ecNumber>2.4.1.207</ecNumber>
    </recommendedName>
</protein>
<proteinExistence type="evidence at transcript level"/>
<keyword id="KW-0052">Apoplast</keyword>
<keyword id="KW-0134">Cell wall</keyword>
<keyword id="KW-0961">Cell wall biogenesis/degradation</keyword>
<keyword id="KW-1015">Disulfide bond</keyword>
<keyword id="KW-0325">Glycoprotein</keyword>
<keyword id="KW-0326">Glycosidase</keyword>
<keyword id="KW-0378">Hydrolase</keyword>
<keyword id="KW-1185">Reference proteome</keyword>
<keyword id="KW-0964">Secreted</keyword>
<keyword id="KW-0732">Signal</keyword>
<keyword id="KW-0808">Transferase</keyword>
<evidence type="ECO:0000250" key="1"/>
<evidence type="ECO:0000250" key="2">
    <source>
        <dbReference type="UniProtKB" id="Q8GZD5"/>
    </source>
</evidence>
<evidence type="ECO:0000255" key="3"/>
<evidence type="ECO:0000255" key="4">
    <source>
        <dbReference type="PROSITE-ProRule" id="PRU01098"/>
    </source>
</evidence>
<evidence type="ECO:0000255" key="5">
    <source>
        <dbReference type="PROSITE-ProRule" id="PRU10064"/>
    </source>
</evidence>
<evidence type="ECO:0000269" key="6">
    <source>
    </source>
</evidence>
<evidence type="ECO:0000305" key="7"/>
<accession>Q9FKL9</accession>
<name>XTH12_ARATH</name>
<sequence length="285" mass="32190">MAAFATKQSPLLLASLLILIGVATGSFYDSFDITWGAGRANIFESGQLLTCTLDKTSGSGFQSKKEYLFGKIDMKIKLVPGNSAGTVTAYYLSSKGETWDEIDFEFLGNVTGQPYVIHTNVFTGGKGNREMQFYLWFDPTADFHTYTVLWNPLNIIFLVDGIPIRVFKNNEANGVAYPKSQPMKIYSSLWEADDWATQGGKVKTDWTNAPFSASYRSFNDVDCCSRTSIWNWVTCNANSNSWMWTTLNSNQLGQLKWVQKDYMIYNYCTDFKRFPQGLPTECNLN</sequence>
<organism>
    <name type="scientific">Arabidopsis thaliana</name>
    <name type="common">Mouse-ear cress</name>
    <dbReference type="NCBI Taxonomy" id="3702"/>
    <lineage>
        <taxon>Eukaryota</taxon>
        <taxon>Viridiplantae</taxon>
        <taxon>Streptophyta</taxon>
        <taxon>Embryophyta</taxon>
        <taxon>Tracheophyta</taxon>
        <taxon>Spermatophyta</taxon>
        <taxon>Magnoliopsida</taxon>
        <taxon>eudicotyledons</taxon>
        <taxon>Gunneridae</taxon>
        <taxon>Pentapetalae</taxon>
        <taxon>rosids</taxon>
        <taxon>malvids</taxon>
        <taxon>Brassicales</taxon>
        <taxon>Brassicaceae</taxon>
        <taxon>Camelineae</taxon>
        <taxon>Arabidopsis</taxon>
    </lineage>
</organism>
<gene>
    <name type="primary">XTH12</name>
    <name type="ordered locus">At5g57530</name>
    <name type="ORF">MUA2.10</name>
</gene>